<gene>
    <name type="primary">REC114</name>
</gene>
<protein>
    <recommendedName>
        <fullName>Meiotic recombination protein REC114</fullName>
    </recommendedName>
</protein>
<organism>
    <name type="scientific">Saccharomyces pastorianus</name>
    <name type="common">Lager yeast</name>
    <name type="synonym">Saccharomyces cerevisiae x Saccharomyces eubayanus</name>
    <dbReference type="NCBI Taxonomy" id="27292"/>
    <lineage>
        <taxon>Eukaryota</taxon>
        <taxon>Fungi</taxon>
        <taxon>Dikarya</taxon>
        <taxon>Ascomycota</taxon>
        <taxon>Saccharomycotina</taxon>
        <taxon>Saccharomycetes</taxon>
        <taxon>Saccharomycetales</taxon>
        <taxon>Saccharomycetaceae</taxon>
        <taxon>Saccharomyces</taxon>
    </lineage>
</organism>
<sequence>MYEYCSVIIKKYSRYTIPSLAPKGFSSVLEPPHIDKWQHLSVNCTLQFKVLLEDSGQVALQVILNNSTFLEHIRLPLGSNHDSIQFSCKCPIISCKYISEEFGPKVLKRFQINLSNEMDFNRIVISLKNLSFIVKTAKTSIARNTMINQTSDFSNSKKGNFNENNNAGTYRNSSVQFQTQNMVMDFSQIYQEKCARELNNCSNITFPMTNLPMTQQNFPTPEANVEHFSQDLNTPSATQTIPIAPEPLSVKLLEASPPLSNKSRHSPTTKKENRNTAISFDLLSKKGAILHNGNDTLNVADLPKKRQSTEDLVQIRSSANVVTTLGTSCNLVKKNATKQNKEKVDNKLSDSQNVAHTNEYQKKKEIPLCGPINGLETKMTLIQEEMMAAKKTSRDPPRKISKRLIKEKLKDEEFMKWVNKVERVLSKMFEK</sequence>
<proteinExistence type="evidence at transcript level"/>
<name>RE114_SACPS</name>
<reference key="1">
    <citation type="journal article" date="1997" name="Mol. Gen. Genet.">
        <title>Examination of the intron in the meiosis-specific recombination gene REC114 in Saccharomyces.</title>
        <authorList>
            <person name="Malone R.E."/>
            <person name="Pittman D.L."/>
            <person name="Nau J.J."/>
        </authorList>
    </citation>
    <scope>NUCLEOTIDE SEQUENCE [GENOMIC DNA]</scope>
    <source>
        <strain>DBVPG 6258 / CBS 1486</strain>
    </source>
</reference>
<accession>P78957</accession>
<dbReference type="EMBL" id="Y08825">
    <property type="protein sequence ID" value="CAA70059.1"/>
    <property type="molecule type" value="Genomic_DNA"/>
</dbReference>
<dbReference type="SMR" id="P78957"/>
<dbReference type="GO" id="GO:0005694">
    <property type="term" value="C:chromosome"/>
    <property type="evidence" value="ECO:0000250"/>
    <property type="project" value="UniProtKB"/>
</dbReference>
<dbReference type="GO" id="GO:0007131">
    <property type="term" value="P:reciprocal meiotic recombination"/>
    <property type="evidence" value="ECO:0007669"/>
    <property type="project" value="InterPro"/>
</dbReference>
<dbReference type="InterPro" id="IPR004354">
    <property type="entry name" value="Meiotic_Rec114"/>
</dbReference>
<dbReference type="Pfam" id="PF03525">
    <property type="entry name" value="Meiotic_rec114"/>
    <property type="match status" value="1"/>
</dbReference>
<dbReference type="PRINTS" id="PR01548">
    <property type="entry name" value="MEIOTICR114"/>
</dbReference>
<feature type="chain" id="PRO_0000097218" description="Meiotic recombination protein REC114">
    <location>
        <begin position="1"/>
        <end position="431"/>
    </location>
</feature>
<comment type="function">
    <text>Required for meiotic recombination events; not required for mitosis.</text>
</comment>
<comment type="subcellular location">
    <subcellularLocation>
        <location evidence="1">Chromosome</location>
    </subcellularLocation>
</comment>
<comment type="developmental stage">
    <text>Meiosis-specific.</text>
</comment>
<comment type="similarity">
    <text evidence="2">Belongs to the REC114 family.</text>
</comment>
<keyword id="KW-0158">Chromosome</keyword>
<keyword id="KW-0469">Meiosis</keyword>
<evidence type="ECO:0000250" key="1">
    <source>
        <dbReference type="UniProtKB" id="Q9CWH4"/>
    </source>
</evidence>
<evidence type="ECO:0000305" key="2"/>